<keyword id="KW-0687">Ribonucleoprotein</keyword>
<keyword id="KW-0689">Ribosomal protein</keyword>
<keyword id="KW-0694">RNA-binding</keyword>
<keyword id="KW-0699">rRNA-binding</keyword>
<protein>
    <recommendedName>
        <fullName evidence="1">Large ribosomal subunit protein uL24</fullName>
    </recommendedName>
    <alternativeName>
        <fullName evidence="2">50S ribosomal protein L24</fullName>
    </alternativeName>
</protein>
<reference key="1">
    <citation type="journal article" date="2006" name="PLoS Genet.">
        <title>Comparative genomics of emerging human ehrlichiosis agents.</title>
        <authorList>
            <person name="Dunning Hotopp J.C."/>
            <person name="Lin M."/>
            <person name="Madupu R."/>
            <person name="Crabtree J."/>
            <person name="Angiuoli S.V."/>
            <person name="Eisen J.A."/>
            <person name="Seshadri R."/>
            <person name="Ren Q."/>
            <person name="Wu M."/>
            <person name="Utterback T.R."/>
            <person name="Smith S."/>
            <person name="Lewis M."/>
            <person name="Khouri H."/>
            <person name="Zhang C."/>
            <person name="Niu H."/>
            <person name="Lin Q."/>
            <person name="Ohashi N."/>
            <person name="Zhi N."/>
            <person name="Nelson W.C."/>
            <person name="Brinkac L.M."/>
            <person name="Dodson R.J."/>
            <person name="Rosovitz M.J."/>
            <person name="Sundaram J.P."/>
            <person name="Daugherty S.C."/>
            <person name="Davidsen T."/>
            <person name="Durkin A.S."/>
            <person name="Gwinn M.L."/>
            <person name="Haft D.H."/>
            <person name="Selengut J.D."/>
            <person name="Sullivan S.A."/>
            <person name="Zafar N."/>
            <person name="Zhou L."/>
            <person name="Benahmed F."/>
            <person name="Forberger H."/>
            <person name="Halpin R."/>
            <person name="Mulligan S."/>
            <person name="Robinson J."/>
            <person name="White O."/>
            <person name="Rikihisa Y."/>
            <person name="Tettelin H."/>
        </authorList>
    </citation>
    <scope>NUCLEOTIDE SEQUENCE [LARGE SCALE GENOMIC DNA]</scope>
    <source>
        <strain>HZ</strain>
    </source>
</reference>
<proteinExistence type="inferred from homology"/>
<gene>
    <name evidence="1" type="primary">rplX</name>
    <name type="ordered locus">APH_0291</name>
</gene>
<dbReference type="EMBL" id="CP000235">
    <property type="protein sequence ID" value="ABD44012.1"/>
    <property type="molecule type" value="Genomic_DNA"/>
</dbReference>
<dbReference type="RefSeq" id="WP_011450426.1">
    <property type="nucleotide sequence ID" value="NC_007797.1"/>
</dbReference>
<dbReference type="SMR" id="Q2GL48"/>
<dbReference type="STRING" id="212042.APH_0291"/>
<dbReference type="PaxDb" id="212042-APH_0291"/>
<dbReference type="EnsemblBacteria" id="ABD44012">
    <property type="protein sequence ID" value="ABD44012"/>
    <property type="gene ID" value="APH_0291"/>
</dbReference>
<dbReference type="GeneID" id="92747512"/>
<dbReference type="KEGG" id="aph:APH_0291"/>
<dbReference type="eggNOG" id="COG0198">
    <property type="taxonomic scope" value="Bacteria"/>
</dbReference>
<dbReference type="HOGENOM" id="CLU_093315_2_0_5"/>
<dbReference type="Proteomes" id="UP000001943">
    <property type="component" value="Chromosome"/>
</dbReference>
<dbReference type="GO" id="GO:1990904">
    <property type="term" value="C:ribonucleoprotein complex"/>
    <property type="evidence" value="ECO:0007669"/>
    <property type="project" value="UniProtKB-KW"/>
</dbReference>
<dbReference type="GO" id="GO:0005840">
    <property type="term" value="C:ribosome"/>
    <property type="evidence" value="ECO:0007669"/>
    <property type="project" value="UniProtKB-KW"/>
</dbReference>
<dbReference type="GO" id="GO:0019843">
    <property type="term" value="F:rRNA binding"/>
    <property type="evidence" value="ECO:0007669"/>
    <property type="project" value="UniProtKB-UniRule"/>
</dbReference>
<dbReference type="GO" id="GO:0003735">
    <property type="term" value="F:structural constituent of ribosome"/>
    <property type="evidence" value="ECO:0007669"/>
    <property type="project" value="InterPro"/>
</dbReference>
<dbReference type="GO" id="GO:0006412">
    <property type="term" value="P:translation"/>
    <property type="evidence" value="ECO:0007669"/>
    <property type="project" value="UniProtKB-UniRule"/>
</dbReference>
<dbReference type="CDD" id="cd06089">
    <property type="entry name" value="KOW_RPL26"/>
    <property type="match status" value="1"/>
</dbReference>
<dbReference type="Gene3D" id="2.30.30.30">
    <property type="match status" value="1"/>
</dbReference>
<dbReference type="HAMAP" id="MF_01326_B">
    <property type="entry name" value="Ribosomal_uL24_B"/>
    <property type="match status" value="1"/>
</dbReference>
<dbReference type="InterPro" id="IPR005824">
    <property type="entry name" value="KOW"/>
</dbReference>
<dbReference type="InterPro" id="IPR014722">
    <property type="entry name" value="Rib_uL2_dom2"/>
</dbReference>
<dbReference type="InterPro" id="IPR003256">
    <property type="entry name" value="Ribosomal_uL24"/>
</dbReference>
<dbReference type="InterPro" id="IPR005825">
    <property type="entry name" value="Ribosomal_uL24_CS"/>
</dbReference>
<dbReference type="InterPro" id="IPR041988">
    <property type="entry name" value="Ribosomal_uL24_KOW"/>
</dbReference>
<dbReference type="InterPro" id="IPR008991">
    <property type="entry name" value="Translation_prot_SH3-like_sf"/>
</dbReference>
<dbReference type="NCBIfam" id="TIGR01079">
    <property type="entry name" value="rplX_bact"/>
    <property type="match status" value="1"/>
</dbReference>
<dbReference type="PANTHER" id="PTHR12903">
    <property type="entry name" value="MITOCHONDRIAL RIBOSOMAL PROTEIN L24"/>
    <property type="match status" value="1"/>
</dbReference>
<dbReference type="Pfam" id="PF00467">
    <property type="entry name" value="KOW"/>
    <property type="match status" value="1"/>
</dbReference>
<dbReference type="Pfam" id="PF17136">
    <property type="entry name" value="ribosomal_L24"/>
    <property type="match status" value="1"/>
</dbReference>
<dbReference type="SMART" id="SM00739">
    <property type="entry name" value="KOW"/>
    <property type="match status" value="1"/>
</dbReference>
<dbReference type="SUPFAM" id="SSF50104">
    <property type="entry name" value="Translation proteins SH3-like domain"/>
    <property type="match status" value="1"/>
</dbReference>
<dbReference type="PROSITE" id="PS01108">
    <property type="entry name" value="RIBOSOMAL_L24"/>
    <property type="match status" value="1"/>
</dbReference>
<evidence type="ECO:0000255" key="1">
    <source>
        <dbReference type="HAMAP-Rule" id="MF_01326"/>
    </source>
</evidence>
<evidence type="ECO:0000305" key="2"/>
<sequence>MAKIVSGDDVIVITGSDKGKVGKVVKILRKGGRVLAKVASVALCRKSVKPSKNREGGIFSIERFIDISNVAFFDSEAGVRTRVGYKFVDGKKVRYLKSSGRVLD</sequence>
<comment type="function">
    <text evidence="1">One of two assembly initiator proteins, it binds directly to the 5'-end of the 23S rRNA, where it nucleates assembly of the 50S subunit.</text>
</comment>
<comment type="function">
    <text evidence="1">One of the proteins that surrounds the polypeptide exit tunnel on the outside of the subunit.</text>
</comment>
<comment type="subunit">
    <text evidence="1">Part of the 50S ribosomal subunit.</text>
</comment>
<comment type="similarity">
    <text evidence="1">Belongs to the universal ribosomal protein uL24 family.</text>
</comment>
<organism>
    <name type="scientific">Anaplasma phagocytophilum (strain HZ)</name>
    <dbReference type="NCBI Taxonomy" id="212042"/>
    <lineage>
        <taxon>Bacteria</taxon>
        <taxon>Pseudomonadati</taxon>
        <taxon>Pseudomonadota</taxon>
        <taxon>Alphaproteobacteria</taxon>
        <taxon>Rickettsiales</taxon>
        <taxon>Anaplasmataceae</taxon>
        <taxon>Anaplasma</taxon>
        <taxon>phagocytophilum group</taxon>
    </lineage>
</organism>
<name>RL24_ANAPZ</name>
<feature type="chain" id="PRO_0000241559" description="Large ribosomal subunit protein uL24">
    <location>
        <begin position="1"/>
        <end position="104"/>
    </location>
</feature>
<accession>Q2GL48</accession>